<organism>
    <name type="scientific">Arabidopsis thaliana</name>
    <name type="common">Mouse-ear cress</name>
    <dbReference type="NCBI Taxonomy" id="3702"/>
    <lineage>
        <taxon>Eukaryota</taxon>
        <taxon>Viridiplantae</taxon>
        <taxon>Streptophyta</taxon>
        <taxon>Embryophyta</taxon>
        <taxon>Tracheophyta</taxon>
        <taxon>Spermatophyta</taxon>
        <taxon>Magnoliopsida</taxon>
        <taxon>eudicotyledons</taxon>
        <taxon>Gunneridae</taxon>
        <taxon>Pentapetalae</taxon>
        <taxon>rosids</taxon>
        <taxon>malvids</taxon>
        <taxon>Brassicales</taxon>
        <taxon>Brassicaceae</taxon>
        <taxon>Camelineae</taxon>
        <taxon>Arabidopsis</taxon>
    </lineage>
</organism>
<proteinExistence type="evidence at transcript level"/>
<name>CRPM4_ARATH</name>
<evidence type="ECO:0000250" key="1"/>
<evidence type="ECO:0000255" key="2"/>
<evidence type="ECO:0000269" key="3">
    <source>
    </source>
</evidence>
<evidence type="ECO:0000305" key="4"/>
<gene>
    <name type="ordered locus">At4g37220</name>
    <name type="ORF">AP22.71</name>
    <name type="ORF">C7A10.140</name>
</gene>
<comment type="subcellular location">
    <subcellularLocation>
        <location evidence="1">Cell membrane</location>
        <topology evidence="1">Multi-pass membrane protein</topology>
    </subcellularLocation>
</comment>
<comment type="induction">
    <text evidence="3">Repressed by sucrose, glucose and fructose. Slightly induced by turanose and mannitol.</text>
</comment>
<comment type="similarity">
    <text evidence="4">Belongs to the Cold-regulated 413 protein family.</text>
</comment>
<protein>
    <recommendedName>
        <fullName>Cold-regulated 413 plasma membrane protein 4</fullName>
        <shortName>AtCOR413-PM4</shortName>
    </recommendedName>
</protein>
<accession>O23164</accession>
<feature type="chain" id="PRO_0000420443" description="Cold-regulated 413 plasma membrane protein 4">
    <location>
        <begin position="1"/>
        <end position="202"/>
    </location>
</feature>
<feature type="topological domain" description="Extracellular" evidence="2">
    <location>
        <begin position="1"/>
        <end position="42"/>
    </location>
</feature>
<feature type="transmembrane region" description="Helical" evidence="2">
    <location>
        <begin position="43"/>
        <end position="63"/>
    </location>
</feature>
<feature type="topological domain" description="Cytoplasmic" evidence="2">
    <location>
        <begin position="64"/>
        <end position="72"/>
    </location>
</feature>
<feature type="transmembrane region" description="Helical" evidence="2">
    <location>
        <begin position="73"/>
        <end position="93"/>
    </location>
</feature>
<feature type="topological domain" description="Extracellular" evidence="2">
    <location>
        <begin position="94"/>
        <end position="97"/>
    </location>
</feature>
<feature type="transmembrane region" description="Helical" evidence="2">
    <location>
        <begin position="98"/>
        <end position="118"/>
    </location>
</feature>
<feature type="topological domain" description="Cytoplasmic" evidence="2">
    <location>
        <position position="119"/>
    </location>
</feature>
<feature type="transmembrane region" description="Helical" evidence="2">
    <location>
        <begin position="120"/>
        <end position="140"/>
    </location>
</feature>
<feature type="topological domain" description="Extracellular" evidence="2">
    <location>
        <begin position="141"/>
        <end position="145"/>
    </location>
</feature>
<feature type="transmembrane region" description="Helical" evidence="2">
    <location>
        <begin position="146"/>
        <end position="166"/>
    </location>
</feature>
<feature type="topological domain" description="Cytoplasmic" evidence="2">
    <location>
        <begin position="167"/>
        <end position="181"/>
    </location>
</feature>
<feature type="transmembrane region" description="Helical" evidence="2">
    <location>
        <begin position="182"/>
        <end position="202"/>
    </location>
</feature>
<reference key="1">
    <citation type="journal article" date="1998" name="Nature">
        <title>Analysis of 1.9 Mb of contiguous sequence from chromosome 4 of Arabidopsis thaliana.</title>
        <authorList>
            <person name="Bevan M."/>
            <person name="Bancroft I."/>
            <person name="Bent E."/>
            <person name="Love K."/>
            <person name="Goodman H.M."/>
            <person name="Dean C."/>
            <person name="Bergkamp R."/>
            <person name="Dirkse W."/>
            <person name="van Staveren M."/>
            <person name="Stiekema W."/>
            <person name="Drost L."/>
            <person name="Ridley P."/>
            <person name="Hudson S.-A."/>
            <person name="Patel K."/>
            <person name="Murphy G."/>
            <person name="Piffanelli P."/>
            <person name="Wedler H."/>
            <person name="Wedler E."/>
            <person name="Wambutt R."/>
            <person name="Weitzenegger T."/>
            <person name="Pohl T."/>
            <person name="Terryn N."/>
            <person name="Gielen J."/>
            <person name="Villarroel R."/>
            <person name="De Clercq R."/>
            <person name="van Montagu M."/>
            <person name="Lecharny A."/>
            <person name="Aubourg S."/>
            <person name="Gy I."/>
            <person name="Kreis M."/>
            <person name="Lao N."/>
            <person name="Kavanagh T."/>
            <person name="Hempel S."/>
            <person name="Kotter P."/>
            <person name="Entian K.-D."/>
            <person name="Rieger M."/>
            <person name="Schaefer M."/>
            <person name="Funk B."/>
            <person name="Mueller-Auer S."/>
            <person name="Silvey M."/>
            <person name="James R."/>
            <person name="Monfort A."/>
            <person name="Pons A."/>
            <person name="Puigdomenech P."/>
            <person name="Douka A."/>
            <person name="Voukelatou E."/>
            <person name="Milioni D."/>
            <person name="Hatzopoulos P."/>
            <person name="Piravandi E."/>
            <person name="Obermaier B."/>
            <person name="Hilbert H."/>
            <person name="Duesterhoeft A."/>
            <person name="Moores T."/>
            <person name="Jones J.D.G."/>
            <person name="Eneva T."/>
            <person name="Palme K."/>
            <person name="Benes V."/>
            <person name="Rechmann S."/>
            <person name="Ansorge W."/>
            <person name="Cooke R."/>
            <person name="Berger C."/>
            <person name="Delseny M."/>
            <person name="Voet M."/>
            <person name="Volckaert G."/>
            <person name="Mewes H.-W."/>
            <person name="Klosterman S."/>
            <person name="Schueller C."/>
            <person name="Chalwatzis N."/>
        </authorList>
    </citation>
    <scope>NUCLEOTIDE SEQUENCE [LARGE SCALE GENOMIC DNA]</scope>
    <source>
        <strain>cv. Columbia</strain>
    </source>
</reference>
<reference key="2">
    <citation type="journal article" date="1999" name="Nature">
        <title>Sequence and analysis of chromosome 4 of the plant Arabidopsis thaliana.</title>
        <authorList>
            <person name="Mayer K.F.X."/>
            <person name="Schueller C."/>
            <person name="Wambutt R."/>
            <person name="Murphy G."/>
            <person name="Volckaert G."/>
            <person name="Pohl T."/>
            <person name="Duesterhoeft A."/>
            <person name="Stiekema W."/>
            <person name="Entian K.-D."/>
            <person name="Terryn N."/>
            <person name="Harris B."/>
            <person name="Ansorge W."/>
            <person name="Brandt P."/>
            <person name="Grivell L.A."/>
            <person name="Rieger M."/>
            <person name="Weichselgartner M."/>
            <person name="de Simone V."/>
            <person name="Obermaier B."/>
            <person name="Mache R."/>
            <person name="Mueller M."/>
            <person name="Kreis M."/>
            <person name="Delseny M."/>
            <person name="Puigdomenech P."/>
            <person name="Watson M."/>
            <person name="Schmidtheini T."/>
            <person name="Reichert B."/>
            <person name="Portetelle D."/>
            <person name="Perez-Alonso M."/>
            <person name="Boutry M."/>
            <person name="Bancroft I."/>
            <person name="Vos P."/>
            <person name="Hoheisel J."/>
            <person name="Zimmermann W."/>
            <person name="Wedler H."/>
            <person name="Ridley P."/>
            <person name="Langham S.-A."/>
            <person name="McCullagh B."/>
            <person name="Bilham L."/>
            <person name="Robben J."/>
            <person name="van der Schueren J."/>
            <person name="Grymonprez B."/>
            <person name="Chuang Y.-J."/>
            <person name="Vandenbussche F."/>
            <person name="Braeken M."/>
            <person name="Weltjens I."/>
            <person name="Voet M."/>
            <person name="Bastiaens I."/>
            <person name="Aert R."/>
            <person name="Defoor E."/>
            <person name="Weitzenegger T."/>
            <person name="Bothe G."/>
            <person name="Ramsperger U."/>
            <person name="Hilbert H."/>
            <person name="Braun M."/>
            <person name="Holzer E."/>
            <person name="Brandt A."/>
            <person name="Peters S."/>
            <person name="van Staveren M."/>
            <person name="Dirkse W."/>
            <person name="Mooijman P."/>
            <person name="Klein Lankhorst R."/>
            <person name="Rose M."/>
            <person name="Hauf J."/>
            <person name="Koetter P."/>
            <person name="Berneiser S."/>
            <person name="Hempel S."/>
            <person name="Feldpausch M."/>
            <person name="Lamberth S."/>
            <person name="Van den Daele H."/>
            <person name="De Keyser A."/>
            <person name="Buysshaert C."/>
            <person name="Gielen J."/>
            <person name="Villarroel R."/>
            <person name="De Clercq R."/>
            <person name="van Montagu M."/>
            <person name="Rogers J."/>
            <person name="Cronin A."/>
            <person name="Quail M.A."/>
            <person name="Bray-Allen S."/>
            <person name="Clark L."/>
            <person name="Doggett J."/>
            <person name="Hall S."/>
            <person name="Kay M."/>
            <person name="Lennard N."/>
            <person name="McLay K."/>
            <person name="Mayes R."/>
            <person name="Pettett A."/>
            <person name="Rajandream M.A."/>
            <person name="Lyne M."/>
            <person name="Benes V."/>
            <person name="Rechmann S."/>
            <person name="Borkova D."/>
            <person name="Bloecker H."/>
            <person name="Scharfe M."/>
            <person name="Grimm M."/>
            <person name="Loehnert T.-H."/>
            <person name="Dose S."/>
            <person name="de Haan M."/>
            <person name="Maarse A.C."/>
            <person name="Schaefer M."/>
            <person name="Mueller-Auer S."/>
            <person name="Gabel C."/>
            <person name="Fuchs M."/>
            <person name="Fartmann B."/>
            <person name="Granderath K."/>
            <person name="Dauner D."/>
            <person name="Herzl A."/>
            <person name="Neumann S."/>
            <person name="Argiriou A."/>
            <person name="Vitale D."/>
            <person name="Liguori R."/>
            <person name="Piravandi E."/>
            <person name="Massenet O."/>
            <person name="Quigley F."/>
            <person name="Clabauld G."/>
            <person name="Muendlein A."/>
            <person name="Felber R."/>
            <person name="Schnabl S."/>
            <person name="Hiller R."/>
            <person name="Schmidt W."/>
            <person name="Lecharny A."/>
            <person name="Aubourg S."/>
            <person name="Chefdor F."/>
            <person name="Cooke R."/>
            <person name="Berger C."/>
            <person name="Monfort A."/>
            <person name="Casacuberta E."/>
            <person name="Gibbons T."/>
            <person name="Weber N."/>
            <person name="Vandenbol M."/>
            <person name="Bargues M."/>
            <person name="Terol J."/>
            <person name="Torres A."/>
            <person name="Perez-Perez A."/>
            <person name="Purnelle B."/>
            <person name="Bent E."/>
            <person name="Johnson S."/>
            <person name="Tacon D."/>
            <person name="Jesse T."/>
            <person name="Heijnen L."/>
            <person name="Schwarz S."/>
            <person name="Scholler P."/>
            <person name="Heber S."/>
            <person name="Francs P."/>
            <person name="Bielke C."/>
            <person name="Frishman D."/>
            <person name="Haase D."/>
            <person name="Lemcke K."/>
            <person name="Mewes H.-W."/>
            <person name="Stocker S."/>
            <person name="Zaccaria P."/>
            <person name="Bevan M."/>
            <person name="Wilson R.K."/>
            <person name="de la Bastide M."/>
            <person name="Habermann K."/>
            <person name="Parnell L."/>
            <person name="Dedhia N."/>
            <person name="Gnoj L."/>
            <person name="Schutz K."/>
            <person name="Huang E."/>
            <person name="Spiegel L."/>
            <person name="Sekhon M."/>
            <person name="Murray J."/>
            <person name="Sheet P."/>
            <person name="Cordes M."/>
            <person name="Abu-Threideh J."/>
            <person name="Stoneking T."/>
            <person name="Kalicki J."/>
            <person name="Graves T."/>
            <person name="Harmon G."/>
            <person name="Edwards J."/>
            <person name="Latreille P."/>
            <person name="Courtney L."/>
            <person name="Cloud J."/>
            <person name="Abbott A."/>
            <person name="Scott K."/>
            <person name="Johnson D."/>
            <person name="Minx P."/>
            <person name="Bentley D."/>
            <person name="Fulton B."/>
            <person name="Miller N."/>
            <person name="Greco T."/>
            <person name="Kemp K."/>
            <person name="Kramer J."/>
            <person name="Fulton L."/>
            <person name="Mardis E."/>
            <person name="Dante M."/>
            <person name="Pepin K."/>
            <person name="Hillier L.W."/>
            <person name="Nelson J."/>
            <person name="Spieth J."/>
            <person name="Ryan E."/>
            <person name="Andrews S."/>
            <person name="Geisel C."/>
            <person name="Layman D."/>
            <person name="Du H."/>
            <person name="Ali J."/>
            <person name="Berghoff A."/>
            <person name="Jones K."/>
            <person name="Drone K."/>
            <person name="Cotton M."/>
            <person name="Joshu C."/>
            <person name="Antonoiu B."/>
            <person name="Zidanic M."/>
            <person name="Strong C."/>
            <person name="Sun H."/>
            <person name="Lamar B."/>
            <person name="Yordan C."/>
            <person name="Ma P."/>
            <person name="Zhong J."/>
            <person name="Preston R."/>
            <person name="Vil D."/>
            <person name="Shekher M."/>
            <person name="Matero A."/>
            <person name="Shah R."/>
            <person name="Swaby I.K."/>
            <person name="O'Shaughnessy A."/>
            <person name="Rodriguez M."/>
            <person name="Hoffman J."/>
            <person name="Till S."/>
            <person name="Granat S."/>
            <person name="Shohdy N."/>
            <person name="Hasegawa A."/>
            <person name="Hameed A."/>
            <person name="Lodhi M."/>
            <person name="Johnson A."/>
            <person name="Chen E."/>
            <person name="Marra M.A."/>
            <person name="Martienssen R."/>
            <person name="McCombie W.R."/>
        </authorList>
    </citation>
    <scope>NUCLEOTIDE SEQUENCE [LARGE SCALE GENOMIC DNA]</scope>
    <source>
        <strain>cv. Columbia</strain>
    </source>
</reference>
<reference key="3">
    <citation type="journal article" date="2017" name="Plant J.">
        <title>Araport11: a complete reannotation of the Arabidopsis thaliana reference genome.</title>
        <authorList>
            <person name="Cheng C.Y."/>
            <person name="Krishnakumar V."/>
            <person name="Chan A.P."/>
            <person name="Thibaud-Nissen F."/>
            <person name="Schobel S."/>
            <person name="Town C.D."/>
        </authorList>
    </citation>
    <scope>GENOME REANNOTATION</scope>
    <source>
        <strain>cv. Columbia</strain>
    </source>
</reference>
<reference key="4">
    <citation type="journal article" date="2002" name="Science">
        <title>Functional annotation of a full-length Arabidopsis cDNA collection.</title>
        <authorList>
            <person name="Seki M."/>
            <person name="Narusaka M."/>
            <person name="Kamiya A."/>
            <person name="Ishida J."/>
            <person name="Satou M."/>
            <person name="Sakurai T."/>
            <person name="Nakajima M."/>
            <person name="Enju A."/>
            <person name="Akiyama K."/>
            <person name="Oono Y."/>
            <person name="Muramatsu M."/>
            <person name="Hayashizaki Y."/>
            <person name="Kawai J."/>
            <person name="Carninci P."/>
            <person name="Itoh M."/>
            <person name="Ishii Y."/>
            <person name="Arakawa T."/>
            <person name="Shibata K."/>
            <person name="Shinagawa A."/>
            <person name="Shinozaki K."/>
        </authorList>
    </citation>
    <scope>NUCLEOTIDE SEQUENCE [LARGE SCALE MRNA]</scope>
    <source>
        <strain>cv. Columbia</strain>
    </source>
</reference>
<reference key="5">
    <citation type="journal article" date="2003" name="Science">
        <title>Empirical analysis of transcriptional activity in the Arabidopsis genome.</title>
        <authorList>
            <person name="Yamada K."/>
            <person name="Lim J."/>
            <person name="Dale J.M."/>
            <person name="Chen H."/>
            <person name="Shinn P."/>
            <person name="Palm C.J."/>
            <person name="Southwick A.M."/>
            <person name="Wu H.C."/>
            <person name="Kim C.J."/>
            <person name="Nguyen M."/>
            <person name="Pham P.K."/>
            <person name="Cheuk R.F."/>
            <person name="Karlin-Newmann G."/>
            <person name="Liu S.X."/>
            <person name="Lam B."/>
            <person name="Sakano H."/>
            <person name="Wu T."/>
            <person name="Yu G."/>
            <person name="Miranda M."/>
            <person name="Quach H.L."/>
            <person name="Tripp M."/>
            <person name="Chang C.H."/>
            <person name="Lee J.M."/>
            <person name="Toriumi M.J."/>
            <person name="Chan M.M."/>
            <person name="Tang C.C."/>
            <person name="Onodera C.S."/>
            <person name="Deng J.M."/>
            <person name="Akiyama K."/>
            <person name="Ansari Y."/>
            <person name="Arakawa T."/>
            <person name="Banh J."/>
            <person name="Banno F."/>
            <person name="Bowser L."/>
            <person name="Brooks S.Y."/>
            <person name="Carninci P."/>
            <person name="Chao Q."/>
            <person name="Choy N."/>
            <person name="Enju A."/>
            <person name="Goldsmith A.D."/>
            <person name="Gurjal M."/>
            <person name="Hansen N.F."/>
            <person name="Hayashizaki Y."/>
            <person name="Johnson-Hopson C."/>
            <person name="Hsuan V.W."/>
            <person name="Iida K."/>
            <person name="Karnes M."/>
            <person name="Khan S."/>
            <person name="Koesema E."/>
            <person name="Ishida J."/>
            <person name="Jiang P.X."/>
            <person name="Jones T."/>
            <person name="Kawai J."/>
            <person name="Kamiya A."/>
            <person name="Meyers C."/>
            <person name="Nakajima M."/>
            <person name="Narusaka M."/>
            <person name="Seki M."/>
            <person name="Sakurai T."/>
            <person name="Satou M."/>
            <person name="Tamse R."/>
            <person name="Vaysberg M."/>
            <person name="Wallender E.K."/>
            <person name="Wong C."/>
            <person name="Yamamura Y."/>
            <person name="Yuan S."/>
            <person name="Shinozaki K."/>
            <person name="Davis R.W."/>
            <person name="Theologis A."/>
            <person name="Ecker J.R."/>
        </authorList>
    </citation>
    <scope>NUCLEOTIDE SEQUENCE [LARGE SCALE MRNA]</scope>
    <source>
        <strain>cv. Columbia</strain>
    </source>
</reference>
<reference key="6">
    <citation type="journal article" date="2006" name="J. Plant Res.">
        <title>Identification of sugar-modulated genes and evidence for in vivo sugar sensing in Arabidopsis.</title>
        <authorList>
            <person name="Gonzali S."/>
            <person name="Loreti E."/>
            <person name="Solfanelli C."/>
            <person name="Novi G."/>
            <person name="Alpi A."/>
            <person name="Perata P."/>
        </authorList>
    </citation>
    <scope>INDUCTION BY SUGARS</scope>
</reference>
<keyword id="KW-1003">Cell membrane</keyword>
<keyword id="KW-0472">Membrane</keyword>
<keyword id="KW-1185">Reference proteome</keyword>
<keyword id="KW-0812">Transmembrane</keyword>
<keyword id="KW-1133">Transmembrane helix</keyword>
<sequence length="202" mass="22632">MGRGEFLAMKTEENAANLINSDMNEFVAAAKKLVKDVGMLGGVGFGTSVLQWAASIFAIYLLILDRTNWKTKMLTTLLVPYIFFTLPSVIFQFFSGDFGKWIALIAIIVRLFFPKEFPEWLEIPVALILIVVVSPSLIAWTLRESWVGAVICLVIACYLFHEHIKASGGFKNSFTQKNGISNTIGIVALLVYPVWTIFFHIF</sequence>
<dbReference type="EMBL" id="Z99707">
    <property type="protein sequence ID" value="CAB16776.1"/>
    <property type="molecule type" value="Genomic_DNA"/>
</dbReference>
<dbReference type="EMBL" id="AL161591">
    <property type="protein sequence ID" value="CAB80388.1"/>
    <property type="molecule type" value="Genomic_DNA"/>
</dbReference>
<dbReference type="EMBL" id="CP002687">
    <property type="protein sequence ID" value="AEE86769.1"/>
    <property type="molecule type" value="Genomic_DNA"/>
</dbReference>
<dbReference type="EMBL" id="AK117399">
    <property type="protein sequence ID" value="BAC42066.1"/>
    <property type="molecule type" value="mRNA"/>
</dbReference>
<dbReference type="EMBL" id="BT005584">
    <property type="protein sequence ID" value="AAO64004.1"/>
    <property type="molecule type" value="mRNA"/>
</dbReference>
<dbReference type="PIR" id="G85439">
    <property type="entry name" value="G85439"/>
</dbReference>
<dbReference type="RefSeq" id="NP_195439.1">
    <property type="nucleotide sequence ID" value="NM_119885.3"/>
</dbReference>
<dbReference type="BioGRID" id="15157">
    <property type="interactions" value="21"/>
</dbReference>
<dbReference type="IntAct" id="O23164">
    <property type="interactions" value="21"/>
</dbReference>
<dbReference type="STRING" id="3702.O23164"/>
<dbReference type="PaxDb" id="3702-AT4G37220.1"/>
<dbReference type="EnsemblPlants" id="AT4G37220.1">
    <property type="protein sequence ID" value="AT4G37220.1"/>
    <property type="gene ID" value="AT4G37220"/>
</dbReference>
<dbReference type="GeneID" id="829876"/>
<dbReference type="Gramene" id="AT4G37220.1">
    <property type="protein sequence ID" value="AT4G37220.1"/>
    <property type="gene ID" value="AT4G37220"/>
</dbReference>
<dbReference type="KEGG" id="ath:AT4G37220"/>
<dbReference type="Araport" id="AT4G37220"/>
<dbReference type="TAIR" id="AT4G37220"/>
<dbReference type="eggNOG" id="ENOG502QQY4">
    <property type="taxonomic scope" value="Eukaryota"/>
</dbReference>
<dbReference type="HOGENOM" id="CLU_081976_1_0_1"/>
<dbReference type="InParanoid" id="O23164"/>
<dbReference type="OMA" id="FFPKEFP"/>
<dbReference type="OrthoDB" id="1887731at2759"/>
<dbReference type="PhylomeDB" id="O23164"/>
<dbReference type="PRO" id="PR:O23164"/>
<dbReference type="Proteomes" id="UP000006548">
    <property type="component" value="Chromosome 4"/>
</dbReference>
<dbReference type="ExpressionAtlas" id="O23164">
    <property type="expression patterns" value="baseline and differential"/>
</dbReference>
<dbReference type="GO" id="GO:0005886">
    <property type="term" value="C:plasma membrane"/>
    <property type="evidence" value="ECO:0007669"/>
    <property type="project" value="UniProtKB-SubCell"/>
</dbReference>
<dbReference type="GO" id="GO:0009750">
    <property type="term" value="P:response to fructose"/>
    <property type="evidence" value="ECO:0000270"/>
    <property type="project" value="TAIR"/>
</dbReference>
<dbReference type="GO" id="GO:0009749">
    <property type="term" value="P:response to glucose"/>
    <property type="evidence" value="ECO:0000270"/>
    <property type="project" value="TAIR"/>
</dbReference>
<dbReference type="GO" id="GO:0009744">
    <property type="term" value="P:response to sucrose"/>
    <property type="evidence" value="ECO:0000270"/>
    <property type="project" value="TAIR"/>
</dbReference>
<dbReference type="InterPro" id="IPR008892">
    <property type="entry name" value="COR413"/>
</dbReference>
<dbReference type="PANTHER" id="PTHR33596">
    <property type="entry name" value="COLD-REGULATED 413 PLASMA MEMBRANE PROTEIN 2"/>
    <property type="match status" value="1"/>
</dbReference>
<dbReference type="PANTHER" id="PTHR33596:SF13">
    <property type="entry name" value="COLD-REGULATED 413 PLASMA MEMBRANE PROTEIN 4"/>
    <property type="match status" value="1"/>
</dbReference>
<dbReference type="Pfam" id="PF05562">
    <property type="entry name" value="WCOR413"/>
    <property type="match status" value="1"/>
</dbReference>